<gene>
    <name type="primary">Apoe</name>
</gene>
<name>APOE_ONYTO</name>
<evidence type="ECO:0000250" key="1">
    <source>
        <dbReference type="UniProtKB" id="P02649"/>
    </source>
</evidence>
<evidence type="ECO:0000250" key="2">
    <source>
        <dbReference type="UniProtKB" id="P08226"/>
    </source>
</evidence>
<evidence type="ECO:0000255" key="3"/>
<evidence type="ECO:0000305" key="4"/>
<sequence>MKALWAVLVVTLLAGCLAEGEPELEPEVTDRLAWQSGQPWELALGRFWDYLRWVQTLSDQVQEELQSSQVTQELTVLMEDTMTELKAYKKELEEQLGPMAEETRARLAKEVQAAQSRLGADMEDLRNRLGQYRNEVQTMLGQSTEELRARLSTHLRKLRKRLMRDAEDLQKRLAVYKAGAREGAERGVGAIRERLGPLVEQGRQRTANLGAGAGKPLQDRAQALGARIRGRLEEVGNQARDRLEEVREQMEEVRAKVEEQAQQMRLQAEIFQARLKGWFEPLVEDMQRQWANLVEKIQASVAANPIPPSSVPQESQ</sequence>
<organism>
    <name type="scientific">Onychomys torridus</name>
    <name type="common">Southern grasshopper mouse</name>
    <name type="synonym">Hesperomys torridus</name>
    <dbReference type="NCBI Taxonomy" id="38674"/>
    <lineage>
        <taxon>Eukaryota</taxon>
        <taxon>Metazoa</taxon>
        <taxon>Chordata</taxon>
        <taxon>Craniata</taxon>
        <taxon>Vertebrata</taxon>
        <taxon>Euteleostomi</taxon>
        <taxon>Mammalia</taxon>
        <taxon>Eutheria</taxon>
        <taxon>Euarchontoglires</taxon>
        <taxon>Glires</taxon>
        <taxon>Rodentia</taxon>
        <taxon>Myomorpha</taxon>
        <taxon>Muroidea</taxon>
        <taxon>Cricetidae</taxon>
        <taxon>Neotominae</taxon>
        <taxon>Onychomys</taxon>
    </lineage>
</organism>
<protein>
    <recommendedName>
        <fullName>Apolipoprotein E</fullName>
        <shortName>Apo-E</shortName>
    </recommendedName>
</protein>
<keyword id="KW-0162">Chylomicron</keyword>
<keyword id="KW-0967">Endosome</keyword>
<keyword id="KW-0272">Extracellular matrix</keyword>
<keyword id="KW-0325">Glycoprotein</keyword>
<keyword id="KW-0345">HDL</keyword>
<keyword id="KW-0358">Heparin-binding</keyword>
<keyword id="KW-0445">Lipid transport</keyword>
<keyword id="KW-0446">Lipid-binding</keyword>
<keyword id="KW-0558">Oxidation</keyword>
<keyword id="KW-0597">Phosphoprotein</keyword>
<keyword id="KW-0677">Repeat</keyword>
<keyword id="KW-0964">Secreted</keyword>
<keyword id="KW-0732">Signal</keyword>
<keyword id="KW-0813">Transport</keyword>
<keyword id="KW-0850">VLDL</keyword>
<accession>P0DUZ6</accession>
<comment type="function">
    <text evidence="1">APOE is an apolipoprotein, a protein associating with lipid particles, that mainly functions in lipoprotein-mediated lipid transport between organs via the plasma and interstitial fluids. APOE is a core component of plasma lipoproteins and is involved in their production, conversion and clearance. Apolipoproteins are amphipathic molecules that interact both with lipids of the lipoprotein particle core and the aqueous environment of the plasma. As such, APOE associates with chylomicrons, chylomicron remnants, very low density lipoproteins (VLDL) and intermediate density lipoproteins (IDL) but shows a preferential binding to high-density lipoproteins (HDL). It also binds a wide range of cellular receptors including the LDL receptor/LDLR, the LDL receptor-related proteins LRP1, LRP2 and LRP8 and the very low-density lipoprotein receptor/VLDLR that mediate the cellular uptake of the APOE-containing lipoprotein particles. Finally, APOE also has a heparin-binding activity and binds heparan-sulfate proteoglycans on the surface of cells, a property that supports the capture and the receptor-mediated uptake of APOE-containing lipoproteins by cells. A main function of APOE is to mediate lipoprotein clearance through the uptake of chylomicrons, VLDLs, and HDLs by hepatocytes. APOE is also involved in the biosynthesis by the liver of VLDLs as well as their uptake by peripheral tissues ensuring the delivery of triglycerides and energy storage in muscle, heart and adipose tissues. By participating in the lipoprotein-mediated distribution of lipids among tissues, APOE plays a critical role in plasma and tissues lipid homeostasis. APOE is also involved in two steps of reverse cholesterol transport, the HDLs-mediated transport of cholesterol from peripheral tissues to the liver, and thereby plays an important role in cholesterol homeostasis. First, it is functionally associated with ABCA1 in the biogenesis of HDLs in tissues. Second, it is enriched in circulating HDLs and mediates their uptake by hepatocytes. APOE also plays an important role in lipid transport in the central nervous system, regulating neuron survival and sprouting.</text>
</comment>
<comment type="subunit">
    <text evidence="1">Homotetramer. May interact with ABCA1; functionally associated with ABCA1 in the biogenesis of HDLs. May interact with APP/A4 amyloid-beta peptide; the interaction is extremely stable in vitro but its physiological significance is unclear. May interact with MAPT. May interact with MAP2. In the cerebrospinal fluid, interacts with secreted SORL1. Interacts with PMEL; this allows the loading of PMEL luminal fragment on ILVs to induce fibril nucleation.</text>
</comment>
<comment type="subcellular location">
    <subcellularLocation>
        <location evidence="1">Secreted</location>
    </subcellularLocation>
    <subcellularLocation>
        <location evidence="1">Secreted</location>
        <location evidence="1">Extracellular space</location>
    </subcellularLocation>
    <subcellularLocation>
        <location evidence="1">Secreted</location>
        <location evidence="1">Extracellular space</location>
        <location evidence="1">Extracellular matrix</location>
    </subcellularLocation>
    <subcellularLocation>
        <location evidence="1">Extracellular vesicle</location>
    </subcellularLocation>
    <subcellularLocation>
        <location evidence="1">Endosome</location>
        <location evidence="1">Multivesicular body</location>
    </subcellularLocation>
    <text evidence="1">In the plasma, APOE is associated with chylomicrons, chylomicrons remnants, VLDL, LDL and HDL lipoproteins. Lipid poor oligomeric APOE is associated with the extracellular matrix in a calcium- and heparan-sulfate proteoglycans-dependent manner. Lipidation induces the release from the extracellular matrix. Colocalizes with CD63 and PMEL at exosomes and in intraluminal vesicles within multivesicular endosomes.</text>
</comment>
<comment type="PTM">
    <text evidence="1">APOE exists as multiple glycosylated and sialylated glycoforms within cells and in plasma. The extent of glycosylation and sialylation are tissue and context specific.</text>
</comment>
<comment type="PTM">
    <text evidence="1">Glycated in plasma VLDL.</text>
</comment>
<comment type="PTM">
    <text evidence="1">Phosphorylated by FAM20C in the extracellular medium.</text>
</comment>
<comment type="similarity">
    <text evidence="4">Belongs to the apolipoprotein A1/A4/E family.</text>
</comment>
<feature type="signal peptide" evidence="3">
    <location>
        <begin position="1"/>
        <end position="18"/>
    </location>
</feature>
<feature type="chain" id="PRO_0000454020" description="Apolipoprotein E">
    <location>
        <begin position="19"/>
        <end position="316"/>
    </location>
</feature>
<feature type="repeat" description="1">
    <location>
        <begin position="76"/>
        <end position="97"/>
    </location>
</feature>
<feature type="repeat" description="2">
    <location>
        <begin position="98"/>
        <end position="119"/>
    </location>
</feature>
<feature type="repeat" description="3">
    <location>
        <begin position="120"/>
        <end position="141"/>
    </location>
</feature>
<feature type="repeat" description="4">
    <location>
        <begin position="142"/>
        <end position="163"/>
    </location>
</feature>
<feature type="repeat" description="5">
    <location>
        <begin position="164"/>
        <end position="185"/>
    </location>
</feature>
<feature type="repeat" description="6">
    <location>
        <begin position="186"/>
        <end position="207"/>
    </location>
</feature>
<feature type="repeat" description="7">
    <location>
        <begin position="208"/>
        <end position="229"/>
    </location>
</feature>
<feature type="repeat" description="8">
    <location>
        <begin position="230"/>
        <end position="251"/>
    </location>
</feature>
<feature type="region of interest" description="8 X 22 AA approximate tandem repeats">
    <location>
        <begin position="76"/>
        <end position="251"/>
    </location>
</feature>
<feature type="region of interest" description="LDL and other lipoprotein receptors binding" evidence="1">
    <location>
        <begin position="154"/>
        <end position="164"/>
    </location>
</feature>
<feature type="region of interest" description="Lipid-binding and lipoprotein association" evidence="1">
    <location>
        <begin position="206"/>
        <end position="286"/>
    </location>
</feature>
<feature type="region of interest" description="Homooligomerization" evidence="1">
    <location>
        <begin position="262"/>
        <end position="316"/>
    </location>
</feature>
<feature type="region of interest" description="Specificity for association with VLDL" evidence="1">
    <location>
        <begin position="274"/>
        <end position="286"/>
    </location>
</feature>
<feature type="binding site" evidence="1">
    <location>
        <begin position="158"/>
        <end position="161"/>
    </location>
    <ligand>
        <name>heparin</name>
        <dbReference type="ChEBI" id="CHEBI:28304"/>
    </ligand>
</feature>
<feature type="binding site" evidence="1">
    <location>
        <begin position="225"/>
        <end position="232"/>
    </location>
    <ligand>
        <name>heparin</name>
        <dbReference type="ChEBI" id="CHEBI:28304"/>
    </ligand>
</feature>
<feature type="modified residue" description="Methionine sulfoxide" evidence="2">
    <location>
        <position position="139"/>
    </location>
</feature>
<feature type="modified residue" description="Phosphoserine" evidence="2">
    <location>
        <position position="143"/>
    </location>
</feature>
<proteinExistence type="inferred from homology"/>
<reference key="1">
    <citation type="submission" date="2020-08" db="EMBL/GenBank/DDBJ databases">
        <authorList>
            <consortium name="Wellcome Sanger Institute Data Sharing"/>
        </authorList>
    </citation>
    <scope>NUCLEOTIDE SEQUENCE [LARGE SCALE GENOMIC DNA]</scope>
</reference>
<reference key="2">
    <citation type="unpublished observations" date="2021-07">
        <authorList>
            <person name="Puppione D.L."/>
        </authorList>
    </citation>
    <scope>IDENTIFICATION</scope>
</reference>
<dbReference type="EMBL" id="LR877188">
    <property type="status" value="NOT_ANNOTATED_CDS"/>
    <property type="molecule type" value="Genomic_DNA"/>
</dbReference>
<dbReference type="RefSeq" id="XP_036039264.1">
    <property type="nucleotide sequence ID" value="XM_036183371.1"/>
</dbReference>
<dbReference type="SMR" id="P0DUZ6"/>
<dbReference type="GeneID" id="118581333"/>
<dbReference type="OrthoDB" id="9048614at2759"/>
<dbReference type="Proteomes" id="UP000836335">
    <property type="component" value="Chromosome 1"/>
</dbReference>
<dbReference type="GO" id="GO:0042627">
    <property type="term" value="C:chylomicron"/>
    <property type="evidence" value="ECO:0007669"/>
    <property type="project" value="UniProtKB-KW"/>
</dbReference>
<dbReference type="GO" id="GO:0070062">
    <property type="term" value="C:extracellular exosome"/>
    <property type="evidence" value="ECO:0000250"/>
    <property type="project" value="UniProtKB"/>
</dbReference>
<dbReference type="GO" id="GO:0034364">
    <property type="term" value="C:high-density lipoprotein particle"/>
    <property type="evidence" value="ECO:0007669"/>
    <property type="project" value="UniProtKB-KW"/>
</dbReference>
<dbReference type="GO" id="GO:0034362">
    <property type="term" value="C:low-density lipoprotein particle"/>
    <property type="evidence" value="ECO:0007669"/>
    <property type="project" value="TreeGrafter"/>
</dbReference>
<dbReference type="GO" id="GO:0097487">
    <property type="term" value="C:multivesicular body, internal vesicle"/>
    <property type="evidence" value="ECO:0000250"/>
    <property type="project" value="UniProtKB"/>
</dbReference>
<dbReference type="GO" id="GO:0034361">
    <property type="term" value="C:very-low-density lipoprotein particle"/>
    <property type="evidence" value="ECO:0007669"/>
    <property type="project" value="UniProtKB-KW"/>
</dbReference>
<dbReference type="GO" id="GO:0120020">
    <property type="term" value="F:cholesterol transfer activity"/>
    <property type="evidence" value="ECO:0007669"/>
    <property type="project" value="TreeGrafter"/>
</dbReference>
<dbReference type="GO" id="GO:0008201">
    <property type="term" value="F:heparin binding"/>
    <property type="evidence" value="ECO:0007669"/>
    <property type="project" value="UniProtKB-KW"/>
</dbReference>
<dbReference type="GO" id="GO:0060228">
    <property type="term" value="F:phosphatidylcholine-sterol O-acyltransferase activator activity"/>
    <property type="evidence" value="ECO:0007669"/>
    <property type="project" value="TreeGrafter"/>
</dbReference>
<dbReference type="GO" id="GO:0005543">
    <property type="term" value="F:phospholipid binding"/>
    <property type="evidence" value="ECO:0007669"/>
    <property type="project" value="TreeGrafter"/>
</dbReference>
<dbReference type="GO" id="GO:0055090">
    <property type="term" value="P:acylglycerol homeostasis"/>
    <property type="evidence" value="ECO:0007669"/>
    <property type="project" value="TreeGrafter"/>
</dbReference>
<dbReference type="GO" id="GO:0033344">
    <property type="term" value="P:cholesterol efflux"/>
    <property type="evidence" value="ECO:0007669"/>
    <property type="project" value="TreeGrafter"/>
</dbReference>
<dbReference type="GO" id="GO:0008203">
    <property type="term" value="P:cholesterol metabolic process"/>
    <property type="evidence" value="ECO:0007669"/>
    <property type="project" value="TreeGrafter"/>
</dbReference>
<dbReference type="GO" id="GO:0042157">
    <property type="term" value="P:lipoprotein metabolic process"/>
    <property type="evidence" value="ECO:0007669"/>
    <property type="project" value="InterPro"/>
</dbReference>
<dbReference type="GO" id="GO:0032438">
    <property type="term" value="P:melanosome organization"/>
    <property type="evidence" value="ECO:0000250"/>
    <property type="project" value="UniProtKB"/>
</dbReference>
<dbReference type="GO" id="GO:0033700">
    <property type="term" value="P:phospholipid efflux"/>
    <property type="evidence" value="ECO:0007669"/>
    <property type="project" value="TreeGrafter"/>
</dbReference>
<dbReference type="FunFam" id="1.20.120.20:FF:000002">
    <property type="entry name" value="Apolipoprotein E"/>
    <property type="match status" value="1"/>
</dbReference>
<dbReference type="FunFam" id="1.20.120.20:FF:000003">
    <property type="entry name" value="Apolipoprotein E"/>
    <property type="match status" value="1"/>
</dbReference>
<dbReference type="Gene3D" id="1.20.120.20">
    <property type="entry name" value="Apolipoprotein"/>
    <property type="match status" value="2"/>
</dbReference>
<dbReference type="InterPro" id="IPR000074">
    <property type="entry name" value="ApoA_E"/>
</dbReference>
<dbReference type="InterPro" id="IPR050163">
    <property type="entry name" value="Apolipoprotein_A1/A4/E"/>
</dbReference>
<dbReference type="PANTHER" id="PTHR18976">
    <property type="entry name" value="APOLIPOPROTEIN"/>
    <property type="match status" value="1"/>
</dbReference>
<dbReference type="PANTHER" id="PTHR18976:SF2">
    <property type="entry name" value="APOLIPOPROTEIN E"/>
    <property type="match status" value="1"/>
</dbReference>
<dbReference type="Pfam" id="PF01442">
    <property type="entry name" value="Apolipoprotein"/>
    <property type="match status" value="1"/>
</dbReference>
<dbReference type="SUPFAM" id="SSF58113">
    <property type="entry name" value="Apolipoprotein A-I"/>
    <property type="match status" value="1"/>
</dbReference>